<gene>
    <name evidence="1" type="primary">murG</name>
    <name type="ordered locus">ECIAI1_0089</name>
</gene>
<sequence length="355" mass="37787">MSGQGKRLMVMAGGTGGHVFPGLAVAHHLMAQGWQVRWLGTADRMEADLVPKHGIEIDFIRISGLRGKGIKALIAAPLRIFNAWRQARAIMKAYKPDVVLGMGGYVSGPGGLAAWSLGIPVVLHEQNGIAGLTNKWLAKIATKVMQAFPGAFPNAEVVGNPVRTDVLALPLPQQRLAGREGPVRVLVVGGSQGARILNQTMPQVAAKLGDSVTIWHQSGKGSQQSVEQAYAEAGQPQHKVTEFIDDMAAAYAWADVVVCRSGALTVSEIAAAGLPALFVPFQHKDRQQYWNALPLEKAGAAKIIEQPQLSVDAVANTLAGWSRETLLTMAERARAASIPDATERVANEVSRAARA</sequence>
<comment type="function">
    <text evidence="1">Cell wall formation. Catalyzes the transfer of a GlcNAc subunit on undecaprenyl-pyrophosphoryl-MurNAc-pentapeptide (lipid intermediate I) to form undecaprenyl-pyrophosphoryl-MurNAc-(pentapeptide)GlcNAc (lipid intermediate II).</text>
</comment>
<comment type="catalytic activity">
    <reaction evidence="1">
        <text>di-trans,octa-cis-undecaprenyl diphospho-N-acetyl-alpha-D-muramoyl-L-alanyl-D-glutamyl-meso-2,6-diaminopimeloyl-D-alanyl-D-alanine + UDP-N-acetyl-alpha-D-glucosamine = di-trans,octa-cis-undecaprenyl diphospho-[N-acetyl-alpha-D-glucosaminyl-(1-&gt;4)]-N-acetyl-alpha-D-muramoyl-L-alanyl-D-glutamyl-meso-2,6-diaminopimeloyl-D-alanyl-D-alanine + UDP + H(+)</text>
        <dbReference type="Rhea" id="RHEA:31227"/>
        <dbReference type="ChEBI" id="CHEBI:15378"/>
        <dbReference type="ChEBI" id="CHEBI:57705"/>
        <dbReference type="ChEBI" id="CHEBI:58223"/>
        <dbReference type="ChEBI" id="CHEBI:61387"/>
        <dbReference type="ChEBI" id="CHEBI:61388"/>
        <dbReference type="EC" id="2.4.1.227"/>
    </reaction>
</comment>
<comment type="pathway">
    <text evidence="1">Cell wall biogenesis; peptidoglycan biosynthesis.</text>
</comment>
<comment type="subcellular location">
    <subcellularLocation>
        <location evidence="1">Cell inner membrane</location>
        <topology evidence="1">Peripheral membrane protein</topology>
        <orientation evidence="1">Cytoplasmic side</orientation>
    </subcellularLocation>
</comment>
<comment type="similarity">
    <text evidence="1">Belongs to the glycosyltransferase 28 family. MurG subfamily.</text>
</comment>
<protein>
    <recommendedName>
        <fullName evidence="1">UDP-N-acetylglucosamine--N-acetylmuramyl-(pentapeptide) pyrophosphoryl-undecaprenol N-acetylglucosamine transferase</fullName>
        <ecNumber evidence="1">2.4.1.227</ecNumber>
    </recommendedName>
    <alternativeName>
        <fullName evidence="1">Undecaprenyl-PP-MurNAc-pentapeptide-UDPGlcNAc GlcNAc transferase</fullName>
    </alternativeName>
</protein>
<proteinExistence type="inferred from homology"/>
<keyword id="KW-0131">Cell cycle</keyword>
<keyword id="KW-0132">Cell division</keyword>
<keyword id="KW-0997">Cell inner membrane</keyword>
<keyword id="KW-1003">Cell membrane</keyword>
<keyword id="KW-0133">Cell shape</keyword>
<keyword id="KW-0961">Cell wall biogenesis/degradation</keyword>
<keyword id="KW-0328">Glycosyltransferase</keyword>
<keyword id="KW-0472">Membrane</keyword>
<keyword id="KW-0573">Peptidoglycan synthesis</keyword>
<keyword id="KW-0808">Transferase</keyword>
<accession>B7M133</accession>
<feature type="chain" id="PRO_1000116477" description="UDP-N-acetylglucosamine--N-acetylmuramyl-(pentapeptide) pyrophosphoryl-undecaprenol N-acetylglucosamine transferase">
    <location>
        <begin position="1"/>
        <end position="355"/>
    </location>
</feature>
<feature type="binding site" evidence="1">
    <location>
        <begin position="15"/>
        <end position="17"/>
    </location>
    <ligand>
        <name>UDP-N-acetyl-alpha-D-glucosamine</name>
        <dbReference type="ChEBI" id="CHEBI:57705"/>
    </ligand>
</feature>
<feature type="binding site" evidence="1">
    <location>
        <position position="127"/>
    </location>
    <ligand>
        <name>UDP-N-acetyl-alpha-D-glucosamine</name>
        <dbReference type="ChEBI" id="CHEBI:57705"/>
    </ligand>
</feature>
<feature type="binding site" evidence="1">
    <location>
        <position position="163"/>
    </location>
    <ligand>
        <name>UDP-N-acetyl-alpha-D-glucosamine</name>
        <dbReference type="ChEBI" id="CHEBI:57705"/>
    </ligand>
</feature>
<feature type="binding site" evidence="1">
    <location>
        <position position="191"/>
    </location>
    <ligand>
        <name>UDP-N-acetyl-alpha-D-glucosamine</name>
        <dbReference type="ChEBI" id="CHEBI:57705"/>
    </ligand>
</feature>
<feature type="binding site" evidence="1">
    <location>
        <position position="244"/>
    </location>
    <ligand>
        <name>UDP-N-acetyl-alpha-D-glucosamine</name>
        <dbReference type="ChEBI" id="CHEBI:57705"/>
    </ligand>
</feature>
<feature type="binding site" evidence="1">
    <location>
        <begin position="263"/>
        <end position="268"/>
    </location>
    <ligand>
        <name>UDP-N-acetyl-alpha-D-glucosamine</name>
        <dbReference type="ChEBI" id="CHEBI:57705"/>
    </ligand>
</feature>
<feature type="binding site" evidence="1">
    <location>
        <position position="288"/>
    </location>
    <ligand>
        <name>UDP-N-acetyl-alpha-D-glucosamine</name>
        <dbReference type="ChEBI" id="CHEBI:57705"/>
    </ligand>
</feature>
<evidence type="ECO:0000255" key="1">
    <source>
        <dbReference type="HAMAP-Rule" id="MF_00033"/>
    </source>
</evidence>
<dbReference type="EC" id="2.4.1.227" evidence="1"/>
<dbReference type="EMBL" id="CU928160">
    <property type="protein sequence ID" value="CAQ96979.1"/>
    <property type="molecule type" value="Genomic_DNA"/>
</dbReference>
<dbReference type="RefSeq" id="WP_000016559.1">
    <property type="nucleotide sequence ID" value="NC_011741.1"/>
</dbReference>
<dbReference type="SMR" id="B7M133"/>
<dbReference type="CAZy" id="GT28">
    <property type="family name" value="Glycosyltransferase Family 28"/>
</dbReference>
<dbReference type="GeneID" id="93777344"/>
<dbReference type="KEGG" id="ecr:ECIAI1_0089"/>
<dbReference type="HOGENOM" id="CLU_037404_2_0_6"/>
<dbReference type="UniPathway" id="UPA00219"/>
<dbReference type="GO" id="GO:0005886">
    <property type="term" value="C:plasma membrane"/>
    <property type="evidence" value="ECO:0007669"/>
    <property type="project" value="UniProtKB-SubCell"/>
</dbReference>
<dbReference type="GO" id="GO:0051991">
    <property type="term" value="F:UDP-N-acetyl-D-glucosamine:N-acetylmuramoyl-L-alanyl-D-glutamyl-meso-2,6-diaminopimelyl-D-alanyl-D-alanine-diphosphoundecaprenol 4-beta-N-acetylglucosaminlytransferase activity"/>
    <property type="evidence" value="ECO:0007669"/>
    <property type="project" value="RHEA"/>
</dbReference>
<dbReference type="GO" id="GO:0050511">
    <property type="term" value="F:undecaprenyldiphospho-muramoylpentapeptide beta-N-acetylglucosaminyltransferase activity"/>
    <property type="evidence" value="ECO:0007669"/>
    <property type="project" value="UniProtKB-UniRule"/>
</dbReference>
<dbReference type="GO" id="GO:0005975">
    <property type="term" value="P:carbohydrate metabolic process"/>
    <property type="evidence" value="ECO:0007669"/>
    <property type="project" value="InterPro"/>
</dbReference>
<dbReference type="GO" id="GO:0051301">
    <property type="term" value="P:cell division"/>
    <property type="evidence" value="ECO:0007669"/>
    <property type="project" value="UniProtKB-KW"/>
</dbReference>
<dbReference type="GO" id="GO:0071555">
    <property type="term" value="P:cell wall organization"/>
    <property type="evidence" value="ECO:0007669"/>
    <property type="project" value="UniProtKB-KW"/>
</dbReference>
<dbReference type="GO" id="GO:0030259">
    <property type="term" value="P:lipid glycosylation"/>
    <property type="evidence" value="ECO:0007669"/>
    <property type="project" value="UniProtKB-UniRule"/>
</dbReference>
<dbReference type="GO" id="GO:0009252">
    <property type="term" value="P:peptidoglycan biosynthetic process"/>
    <property type="evidence" value="ECO:0007669"/>
    <property type="project" value="UniProtKB-UniRule"/>
</dbReference>
<dbReference type="GO" id="GO:0008360">
    <property type="term" value="P:regulation of cell shape"/>
    <property type="evidence" value="ECO:0007669"/>
    <property type="project" value="UniProtKB-KW"/>
</dbReference>
<dbReference type="CDD" id="cd03785">
    <property type="entry name" value="GT28_MurG"/>
    <property type="match status" value="1"/>
</dbReference>
<dbReference type="FunFam" id="3.40.50.2000:FF:000016">
    <property type="entry name" value="UDP-N-acetylglucosamine--N-acetylmuramyl-(pentapeptide) pyrophosphoryl-undecaprenol N-acetylglucosamine transferase"/>
    <property type="match status" value="1"/>
</dbReference>
<dbReference type="FunFam" id="3.40.50.2000:FF:000018">
    <property type="entry name" value="UDP-N-acetylglucosamine--N-acetylmuramyl-(pentapeptide) pyrophosphoryl-undecaprenol N-acetylglucosamine transferase"/>
    <property type="match status" value="1"/>
</dbReference>
<dbReference type="Gene3D" id="3.40.50.2000">
    <property type="entry name" value="Glycogen Phosphorylase B"/>
    <property type="match status" value="2"/>
</dbReference>
<dbReference type="HAMAP" id="MF_00033">
    <property type="entry name" value="MurG"/>
    <property type="match status" value="1"/>
</dbReference>
<dbReference type="InterPro" id="IPR006009">
    <property type="entry name" value="GlcNAc_MurG"/>
</dbReference>
<dbReference type="InterPro" id="IPR007235">
    <property type="entry name" value="Glyco_trans_28_C"/>
</dbReference>
<dbReference type="InterPro" id="IPR004276">
    <property type="entry name" value="GlycoTrans_28_N"/>
</dbReference>
<dbReference type="NCBIfam" id="TIGR01133">
    <property type="entry name" value="murG"/>
    <property type="match status" value="1"/>
</dbReference>
<dbReference type="PANTHER" id="PTHR21015:SF22">
    <property type="entry name" value="GLYCOSYLTRANSFERASE"/>
    <property type="match status" value="1"/>
</dbReference>
<dbReference type="PANTHER" id="PTHR21015">
    <property type="entry name" value="UDP-N-ACETYLGLUCOSAMINE--N-ACETYLMURAMYL-(PENTAPEPTIDE) PYROPHOSPHORYL-UNDECAPRENOL N-ACETYLGLUCOSAMINE TRANSFERASE 1"/>
    <property type="match status" value="1"/>
</dbReference>
<dbReference type="Pfam" id="PF04101">
    <property type="entry name" value="Glyco_tran_28_C"/>
    <property type="match status" value="1"/>
</dbReference>
<dbReference type="Pfam" id="PF03033">
    <property type="entry name" value="Glyco_transf_28"/>
    <property type="match status" value="1"/>
</dbReference>
<dbReference type="SUPFAM" id="SSF53756">
    <property type="entry name" value="UDP-Glycosyltransferase/glycogen phosphorylase"/>
    <property type="match status" value="1"/>
</dbReference>
<organism>
    <name type="scientific">Escherichia coli O8 (strain IAI1)</name>
    <dbReference type="NCBI Taxonomy" id="585034"/>
    <lineage>
        <taxon>Bacteria</taxon>
        <taxon>Pseudomonadati</taxon>
        <taxon>Pseudomonadota</taxon>
        <taxon>Gammaproteobacteria</taxon>
        <taxon>Enterobacterales</taxon>
        <taxon>Enterobacteriaceae</taxon>
        <taxon>Escherichia</taxon>
    </lineage>
</organism>
<name>MURG_ECO8A</name>
<reference key="1">
    <citation type="journal article" date="2009" name="PLoS Genet.">
        <title>Organised genome dynamics in the Escherichia coli species results in highly diverse adaptive paths.</title>
        <authorList>
            <person name="Touchon M."/>
            <person name="Hoede C."/>
            <person name="Tenaillon O."/>
            <person name="Barbe V."/>
            <person name="Baeriswyl S."/>
            <person name="Bidet P."/>
            <person name="Bingen E."/>
            <person name="Bonacorsi S."/>
            <person name="Bouchier C."/>
            <person name="Bouvet O."/>
            <person name="Calteau A."/>
            <person name="Chiapello H."/>
            <person name="Clermont O."/>
            <person name="Cruveiller S."/>
            <person name="Danchin A."/>
            <person name="Diard M."/>
            <person name="Dossat C."/>
            <person name="Karoui M.E."/>
            <person name="Frapy E."/>
            <person name="Garry L."/>
            <person name="Ghigo J.M."/>
            <person name="Gilles A.M."/>
            <person name="Johnson J."/>
            <person name="Le Bouguenec C."/>
            <person name="Lescat M."/>
            <person name="Mangenot S."/>
            <person name="Martinez-Jehanne V."/>
            <person name="Matic I."/>
            <person name="Nassif X."/>
            <person name="Oztas S."/>
            <person name="Petit M.A."/>
            <person name="Pichon C."/>
            <person name="Rouy Z."/>
            <person name="Ruf C.S."/>
            <person name="Schneider D."/>
            <person name="Tourret J."/>
            <person name="Vacherie B."/>
            <person name="Vallenet D."/>
            <person name="Medigue C."/>
            <person name="Rocha E.P.C."/>
            <person name="Denamur E."/>
        </authorList>
    </citation>
    <scope>NUCLEOTIDE SEQUENCE [LARGE SCALE GENOMIC DNA]</scope>
    <source>
        <strain>IAI1</strain>
    </source>
</reference>